<accession>B1GYM8</accession>
<proteinExistence type="inferred from homology"/>
<comment type="function">
    <text evidence="1">Cell wall formation.</text>
</comment>
<comment type="catalytic activity">
    <reaction evidence="1">
        <text>UDP-N-acetyl-alpha-D-muramate + L-alanine + ATP = UDP-N-acetyl-alpha-D-muramoyl-L-alanine + ADP + phosphate + H(+)</text>
        <dbReference type="Rhea" id="RHEA:23372"/>
        <dbReference type="ChEBI" id="CHEBI:15378"/>
        <dbReference type="ChEBI" id="CHEBI:30616"/>
        <dbReference type="ChEBI" id="CHEBI:43474"/>
        <dbReference type="ChEBI" id="CHEBI:57972"/>
        <dbReference type="ChEBI" id="CHEBI:70757"/>
        <dbReference type="ChEBI" id="CHEBI:83898"/>
        <dbReference type="ChEBI" id="CHEBI:456216"/>
        <dbReference type="EC" id="6.3.2.8"/>
    </reaction>
</comment>
<comment type="pathway">
    <text evidence="1">Cell wall biogenesis; peptidoglycan biosynthesis.</text>
</comment>
<comment type="subcellular location">
    <subcellularLocation>
        <location evidence="1">Cytoplasm</location>
    </subcellularLocation>
</comment>
<comment type="similarity">
    <text evidence="1">Belongs to the MurCDEF family.</text>
</comment>
<organism>
    <name type="scientific">Endomicrobium trichonymphae</name>
    <dbReference type="NCBI Taxonomy" id="1408204"/>
    <lineage>
        <taxon>Bacteria</taxon>
        <taxon>Pseudomonadati</taxon>
        <taxon>Elusimicrobiota</taxon>
        <taxon>Endomicrobiia</taxon>
        <taxon>Endomicrobiales</taxon>
        <taxon>Endomicrobiaceae</taxon>
        <taxon>Candidatus Endomicrobiellum</taxon>
    </lineage>
</organism>
<keyword id="KW-0067">ATP-binding</keyword>
<keyword id="KW-0131">Cell cycle</keyword>
<keyword id="KW-0132">Cell division</keyword>
<keyword id="KW-0133">Cell shape</keyword>
<keyword id="KW-0961">Cell wall biogenesis/degradation</keyword>
<keyword id="KW-0963">Cytoplasm</keyword>
<keyword id="KW-0436">Ligase</keyword>
<keyword id="KW-0547">Nucleotide-binding</keyword>
<keyword id="KW-0573">Peptidoglycan synthesis</keyword>
<feature type="chain" id="PRO_1000091148" description="UDP-N-acetylmuramate--L-alanine ligase">
    <location>
        <begin position="1"/>
        <end position="450"/>
    </location>
</feature>
<feature type="binding site" evidence="1">
    <location>
        <begin position="112"/>
        <end position="118"/>
    </location>
    <ligand>
        <name>ATP</name>
        <dbReference type="ChEBI" id="CHEBI:30616"/>
    </ligand>
</feature>
<name>MURC_ENDTX</name>
<reference key="1">
    <citation type="journal article" date="2008" name="Proc. Natl. Acad. Sci. U.S.A.">
        <title>Complete genome of the uncultured termite group 1 bacteria in a single host protist cell.</title>
        <authorList>
            <person name="Hongoh Y."/>
            <person name="Sharma V.K."/>
            <person name="Prakash T."/>
            <person name="Noda S."/>
            <person name="Taylor T.D."/>
            <person name="Kudo T."/>
            <person name="Sakaki Y."/>
            <person name="Toyoda A."/>
            <person name="Hattori M."/>
            <person name="Ohkuma M."/>
        </authorList>
    </citation>
    <scope>NUCLEOTIDE SEQUENCE [LARGE SCALE GENOMIC DNA]</scope>
</reference>
<dbReference type="EC" id="6.3.2.8" evidence="1"/>
<dbReference type="EMBL" id="AP009510">
    <property type="protein sequence ID" value="BAG14121.1"/>
    <property type="molecule type" value="Genomic_DNA"/>
</dbReference>
<dbReference type="RefSeq" id="WP_015423645.1">
    <property type="nucleotide sequence ID" value="NC_020419.1"/>
</dbReference>
<dbReference type="SMR" id="B1GYM8"/>
<dbReference type="STRING" id="471821.TGRD_638"/>
<dbReference type="KEGG" id="rsd:TGRD_638"/>
<dbReference type="PATRIC" id="fig|471821.5.peg.1073"/>
<dbReference type="HOGENOM" id="CLU_028104_2_2_0"/>
<dbReference type="UniPathway" id="UPA00219"/>
<dbReference type="Proteomes" id="UP000001691">
    <property type="component" value="Chromosome"/>
</dbReference>
<dbReference type="GO" id="GO:0005737">
    <property type="term" value="C:cytoplasm"/>
    <property type="evidence" value="ECO:0007669"/>
    <property type="project" value="UniProtKB-SubCell"/>
</dbReference>
<dbReference type="GO" id="GO:0005524">
    <property type="term" value="F:ATP binding"/>
    <property type="evidence" value="ECO:0007669"/>
    <property type="project" value="UniProtKB-UniRule"/>
</dbReference>
<dbReference type="GO" id="GO:0008763">
    <property type="term" value="F:UDP-N-acetylmuramate-L-alanine ligase activity"/>
    <property type="evidence" value="ECO:0007669"/>
    <property type="project" value="UniProtKB-UniRule"/>
</dbReference>
<dbReference type="GO" id="GO:0051301">
    <property type="term" value="P:cell division"/>
    <property type="evidence" value="ECO:0007669"/>
    <property type="project" value="UniProtKB-KW"/>
</dbReference>
<dbReference type="GO" id="GO:0071555">
    <property type="term" value="P:cell wall organization"/>
    <property type="evidence" value="ECO:0007669"/>
    <property type="project" value="UniProtKB-KW"/>
</dbReference>
<dbReference type="GO" id="GO:0009252">
    <property type="term" value="P:peptidoglycan biosynthetic process"/>
    <property type="evidence" value="ECO:0007669"/>
    <property type="project" value="UniProtKB-UniRule"/>
</dbReference>
<dbReference type="GO" id="GO:0008360">
    <property type="term" value="P:regulation of cell shape"/>
    <property type="evidence" value="ECO:0007669"/>
    <property type="project" value="UniProtKB-KW"/>
</dbReference>
<dbReference type="Gene3D" id="3.90.190.20">
    <property type="entry name" value="Mur ligase, C-terminal domain"/>
    <property type="match status" value="1"/>
</dbReference>
<dbReference type="Gene3D" id="3.40.1190.10">
    <property type="entry name" value="Mur-like, catalytic domain"/>
    <property type="match status" value="1"/>
</dbReference>
<dbReference type="Gene3D" id="3.40.50.720">
    <property type="entry name" value="NAD(P)-binding Rossmann-like Domain"/>
    <property type="match status" value="1"/>
</dbReference>
<dbReference type="HAMAP" id="MF_00046">
    <property type="entry name" value="MurC"/>
    <property type="match status" value="1"/>
</dbReference>
<dbReference type="InterPro" id="IPR036565">
    <property type="entry name" value="Mur-like_cat_sf"/>
</dbReference>
<dbReference type="InterPro" id="IPR004101">
    <property type="entry name" value="Mur_ligase_C"/>
</dbReference>
<dbReference type="InterPro" id="IPR036615">
    <property type="entry name" value="Mur_ligase_C_dom_sf"/>
</dbReference>
<dbReference type="InterPro" id="IPR013221">
    <property type="entry name" value="Mur_ligase_cen"/>
</dbReference>
<dbReference type="InterPro" id="IPR000713">
    <property type="entry name" value="Mur_ligase_N"/>
</dbReference>
<dbReference type="InterPro" id="IPR050061">
    <property type="entry name" value="MurCDEF_pg_biosynth"/>
</dbReference>
<dbReference type="InterPro" id="IPR005758">
    <property type="entry name" value="UDP-N-AcMur_Ala_ligase_MurC"/>
</dbReference>
<dbReference type="NCBIfam" id="TIGR01082">
    <property type="entry name" value="murC"/>
    <property type="match status" value="1"/>
</dbReference>
<dbReference type="PANTHER" id="PTHR43445:SF3">
    <property type="entry name" value="UDP-N-ACETYLMURAMATE--L-ALANINE LIGASE"/>
    <property type="match status" value="1"/>
</dbReference>
<dbReference type="PANTHER" id="PTHR43445">
    <property type="entry name" value="UDP-N-ACETYLMURAMATE--L-ALANINE LIGASE-RELATED"/>
    <property type="match status" value="1"/>
</dbReference>
<dbReference type="Pfam" id="PF01225">
    <property type="entry name" value="Mur_ligase"/>
    <property type="match status" value="1"/>
</dbReference>
<dbReference type="Pfam" id="PF02875">
    <property type="entry name" value="Mur_ligase_C"/>
    <property type="match status" value="1"/>
</dbReference>
<dbReference type="Pfam" id="PF08245">
    <property type="entry name" value="Mur_ligase_M"/>
    <property type="match status" value="1"/>
</dbReference>
<dbReference type="SUPFAM" id="SSF51984">
    <property type="entry name" value="MurCD N-terminal domain"/>
    <property type="match status" value="1"/>
</dbReference>
<dbReference type="SUPFAM" id="SSF53623">
    <property type="entry name" value="MurD-like peptide ligases, catalytic domain"/>
    <property type="match status" value="1"/>
</dbReference>
<dbReference type="SUPFAM" id="SSF53244">
    <property type="entry name" value="MurD-like peptide ligases, peptide-binding domain"/>
    <property type="match status" value="1"/>
</dbReference>
<protein>
    <recommendedName>
        <fullName evidence="1">UDP-N-acetylmuramate--L-alanine ligase</fullName>
        <ecNumber evidence="1">6.3.2.8</ecNumber>
    </recommendedName>
    <alternativeName>
        <fullName evidence="1">UDP-N-acetylmuramoyl-L-alanine synthetase</fullName>
    </alternativeName>
</protein>
<gene>
    <name evidence="1" type="primary">murC</name>
    <name type="ordered locus">TGRD_638</name>
</gene>
<sequence length="450" mass="49592">MFLKNQNIHFVGIGGSGMSGIAEVLINLGHRVSGSDLKKTDVTEYLKAVGAKIYIGHSCKNIKSAEVVVTSTAISRNNPEVVAALKKRIPIIARIEMLVELARLKYAVTITGTHGKTTTTSLTSLVLHNGGLDPTIVIGGRLKNLKTNAKLGRGDYIVVEADESDGSFLRLSPIITVVTNIDNDHLDYYDSMENLKEAFVKHINCIPFYGTAIICSDNEVVRKIIPQITRRYITYGLMGNPDIKASNIKVLKNHTSFDVFYMRKKVGSVCMKILGKHNVSNSLAAIGVGLRLGISFSSIADTINKFDGVSRRLEIKGEKNGMMVIDDYGHHPTEVAATLRAIKLFWPERRLVVLFQPHRYTRTKQLFNEFGRSFSDADFVKVLDIYSAGEQPIDEVTSDLILESLVSNKCKAEKFSDLEEFSKGLSVGDVVLTLGAGDVWKKGEELLALI</sequence>
<evidence type="ECO:0000255" key="1">
    <source>
        <dbReference type="HAMAP-Rule" id="MF_00046"/>
    </source>
</evidence>